<name>SRP19_HUMAN</name>
<sequence>MACAAARSPADQDRFICIYPAYLNNKKTIAEGRRIPISKAVENPTATEIQDVCSAVGLNVFLEKNKMYSREWNRDVQYRGRVRVQLKQEDGSLCLVQFPSRKSVMLYAAEMIPKLKTRTQKTGGADQSLQQGEGSKKGKGKKKK</sequence>
<proteinExistence type="evidence at protein level"/>
<gene>
    <name type="primary">SRP19</name>
</gene>
<organism>
    <name type="scientific">Homo sapiens</name>
    <name type="common">Human</name>
    <dbReference type="NCBI Taxonomy" id="9606"/>
    <lineage>
        <taxon>Eukaryota</taxon>
        <taxon>Metazoa</taxon>
        <taxon>Chordata</taxon>
        <taxon>Craniata</taxon>
        <taxon>Vertebrata</taxon>
        <taxon>Euteleostomi</taxon>
        <taxon>Mammalia</taxon>
        <taxon>Eutheria</taxon>
        <taxon>Euarchontoglires</taxon>
        <taxon>Primates</taxon>
        <taxon>Haplorrhini</taxon>
        <taxon>Catarrhini</taxon>
        <taxon>Hominidae</taxon>
        <taxon>Homo</taxon>
    </lineage>
</organism>
<comment type="function">
    <text evidence="1">Component of the signal recognition particle (SRP) complex, a ribonucleoprotein complex that mediates the cotranslational targeting of secretory and membrane proteins to the endoplasmic reticulum (ER) (By similarity). Binds directly to 7SL RNA (By similarity). Mediates binding of SRP54 to the SRP complex (By similarity).</text>
</comment>
<comment type="subunit">
    <text evidence="4 5 7">Component of a signal recognition particle complex that consists of a 7SL RNA molecule of 300 nucleotides and 6 protein subunits: SRP72, SRP68, SRP54, SRP19, SRP14 and SRP9 (PubMed:12244299, PubMed:20179341). Interacts with IPO5, IPO7, IPO8, KPNB1 and TNPO1. Interactions with IPO8 and TNPO1 may be involved in SRP19 import into the nucleus (PubMed:11682607).</text>
</comment>
<comment type="interaction">
    <interactant intactId="EBI-2680090">
        <id>P09132</id>
    </interactant>
    <interactant intactId="EBI-1048560">
        <id>Q9UHB9</id>
        <label>SRP68</label>
    </interactant>
    <organismsDiffer>false</organismsDiffer>
    <experiments>6</experiments>
</comment>
<comment type="subcellular location">
    <subcellularLocation>
        <location evidence="3 4">Cytoplasm</location>
    </subcellularLocation>
    <subcellularLocation>
        <location evidence="3 4">Nucleus</location>
        <location evidence="3 4">Nucleolus</location>
    </subcellularLocation>
    <subcellularLocation>
        <location evidence="4">Nucleus</location>
        <location evidence="4">Nucleoplasm</location>
    </subcellularLocation>
    <text evidence="4">Although the signal recognition particle complex acts in the cytoplasm, it assembles at least in part in the nucleus and/or the nucleolus. SRP19 nuclear import may be mediated by IPO8/Imp8 and TPNO1/Trn.</text>
</comment>
<comment type="alternative products">
    <event type="alternative splicing"/>
    <isoform>
        <id>P09132-1</id>
        <name>1</name>
        <sequence type="displayed"/>
    </isoform>
    <isoform>
        <id>P09132-2</id>
        <name>2</name>
        <sequence type="described" ref="VSP_042540"/>
    </isoform>
    <isoform>
        <id>P09132-3</id>
        <name>3</name>
        <sequence type="described" ref="VSP_044524"/>
    </isoform>
</comment>
<comment type="similarity">
    <text evidence="10">Belongs to the SRP19 family.</text>
</comment>
<comment type="online information" name="Wikipedia">
    <link uri="https://en.wikipedia.org/wiki/Signal-recognition_particle"/>
    <text>Signal recognition particle entry</text>
</comment>
<protein>
    <recommendedName>
        <fullName>Signal recognition particle 19 kDa protein</fullName>
        <shortName>SRP19</shortName>
    </recommendedName>
</protein>
<keyword id="KW-0002">3D-structure</keyword>
<keyword id="KW-0025">Alternative splicing</keyword>
<keyword id="KW-0963">Cytoplasm</keyword>
<keyword id="KW-0903">Direct protein sequencing</keyword>
<keyword id="KW-0539">Nucleus</keyword>
<keyword id="KW-1267">Proteomics identification</keyword>
<keyword id="KW-1185">Reference proteome</keyword>
<keyword id="KW-0687">Ribonucleoprotein</keyword>
<keyword id="KW-0694">RNA-binding</keyword>
<keyword id="KW-0733">Signal recognition particle</keyword>
<feature type="chain" id="PRO_0000135197" description="Signal recognition particle 19 kDa protein">
    <location>
        <begin position="1"/>
        <end position="144"/>
    </location>
</feature>
<feature type="region of interest" description="Disordered" evidence="2">
    <location>
        <begin position="117"/>
        <end position="144"/>
    </location>
</feature>
<feature type="compositionally biased region" description="Polar residues" evidence="2">
    <location>
        <begin position="120"/>
        <end position="133"/>
    </location>
</feature>
<feature type="splice variant" id="VSP_044524" description="In isoform 3." evidence="9">
    <original>FICIYPAYLNNKKTIAEGRRIPISKAVENPTATEIQDVCSAVGLNVFLEKNKMYSREWNRDVQYRGRVRVQLKQEDGSLCLVQFPSRKSVMLYAAEMIPKLKTRTQKTGGADQSLQQGEGSKKGKGKKKK</original>
    <variation>LLKILQLQRFKMYVQQLDLTYFLRKIKCTLENGIVMSNTEAESGSSSNRKMGASALYSSHHVSQ</variation>
    <location>
        <begin position="15"/>
        <end position="144"/>
    </location>
</feature>
<feature type="splice variant" id="VSP_042540" description="In isoform 2." evidence="8">
    <original>RKSVMLYAAEMIPKLKTRTQKTGGADQSLQQGEGSKKGKGKKKK</original>
    <variation>HYTLSLTSGS</variation>
    <location>
        <begin position="101"/>
        <end position="144"/>
    </location>
</feature>
<feature type="sequence variant" id="VAR_027800" description="In dbSNP:rs17855423." evidence="6">
    <original>A</original>
    <variation>T</variation>
    <location>
        <position position="4"/>
    </location>
</feature>
<feature type="helix" evidence="14">
    <location>
        <begin position="12"/>
        <end position="14"/>
    </location>
</feature>
<feature type="strand" evidence="14">
    <location>
        <begin position="15"/>
        <end position="18"/>
    </location>
</feature>
<feature type="helix" evidence="14">
    <location>
        <begin position="20"/>
        <end position="23"/>
    </location>
</feature>
<feature type="turn" evidence="14">
    <location>
        <begin position="29"/>
        <end position="32"/>
    </location>
</feature>
<feature type="turn" evidence="14">
    <location>
        <begin position="37"/>
        <end position="39"/>
    </location>
</feature>
<feature type="strand" evidence="14">
    <location>
        <begin position="41"/>
        <end position="43"/>
    </location>
</feature>
<feature type="helix" evidence="14">
    <location>
        <begin position="46"/>
        <end position="55"/>
    </location>
</feature>
<feature type="strand" evidence="14">
    <location>
        <begin position="60"/>
        <end position="63"/>
    </location>
</feature>
<feature type="helix" evidence="14">
    <location>
        <begin position="76"/>
        <end position="78"/>
    </location>
</feature>
<feature type="strand" evidence="14">
    <location>
        <begin position="81"/>
        <end position="84"/>
    </location>
</feature>
<feature type="strand" evidence="16">
    <location>
        <begin position="89"/>
        <end position="91"/>
    </location>
</feature>
<feature type="strand" evidence="15">
    <location>
        <begin position="93"/>
        <end position="95"/>
    </location>
</feature>
<feature type="helix" evidence="14">
    <location>
        <begin position="101"/>
        <end position="111"/>
    </location>
</feature>
<feature type="helix" evidence="14">
    <location>
        <begin position="112"/>
        <end position="114"/>
    </location>
</feature>
<feature type="helix" evidence="15">
    <location>
        <begin position="116"/>
        <end position="119"/>
    </location>
</feature>
<reference key="1">
    <citation type="journal article" date="1988" name="Nucleic Acids Res.">
        <title>Isolation and characterization of a cDNA clone encoding the 19 kDa protein of signal recognition particle (SRP): expression and binding to 7SL RNA.</title>
        <authorList>
            <person name="Lingelbach K."/>
            <person name="Zwieb C."/>
            <person name="Webb J.R."/>
            <person name="Marshallsaz C."/>
            <person name="Hoben P."/>
            <person name="Walter P."/>
            <person name="Dobberstein B."/>
        </authorList>
    </citation>
    <scope>NUCLEOTIDE SEQUENCE [MRNA] (ISOFORM 1)</scope>
    <scope>PARTIAL PROTEIN SEQUENCE</scope>
    <source>
        <tissue>Liver</tissue>
    </source>
</reference>
<reference key="2">
    <citation type="submission" date="2002-10" db="EMBL/GenBank/DDBJ databases">
        <title>Gene expression in human erythroid precursor cells.</title>
        <authorList>
            <person name="Gubin A.N."/>
            <person name="Lee Y.T."/>
            <person name="Bouffard G.G."/>
            <person name="Miller J.L."/>
        </authorList>
    </citation>
    <scope>NUCLEOTIDE SEQUENCE [MRNA] (ISOFORM 3)</scope>
    <source>
        <tissue>Erythroblast</tissue>
    </source>
</reference>
<reference key="3">
    <citation type="journal article" date="2004" name="Nat. Genet.">
        <title>Complete sequencing and characterization of 21,243 full-length human cDNAs.</title>
        <authorList>
            <person name="Ota T."/>
            <person name="Suzuki Y."/>
            <person name="Nishikawa T."/>
            <person name="Otsuki T."/>
            <person name="Sugiyama T."/>
            <person name="Irie R."/>
            <person name="Wakamatsu A."/>
            <person name="Hayashi K."/>
            <person name="Sato H."/>
            <person name="Nagai K."/>
            <person name="Kimura K."/>
            <person name="Makita H."/>
            <person name="Sekine M."/>
            <person name="Obayashi M."/>
            <person name="Nishi T."/>
            <person name="Shibahara T."/>
            <person name="Tanaka T."/>
            <person name="Ishii S."/>
            <person name="Yamamoto J."/>
            <person name="Saito K."/>
            <person name="Kawai Y."/>
            <person name="Isono Y."/>
            <person name="Nakamura Y."/>
            <person name="Nagahari K."/>
            <person name="Murakami K."/>
            <person name="Yasuda T."/>
            <person name="Iwayanagi T."/>
            <person name="Wagatsuma M."/>
            <person name="Shiratori A."/>
            <person name="Sudo H."/>
            <person name="Hosoiri T."/>
            <person name="Kaku Y."/>
            <person name="Kodaira H."/>
            <person name="Kondo H."/>
            <person name="Sugawara M."/>
            <person name="Takahashi M."/>
            <person name="Kanda K."/>
            <person name="Yokoi T."/>
            <person name="Furuya T."/>
            <person name="Kikkawa E."/>
            <person name="Omura Y."/>
            <person name="Abe K."/>
            <person name="Kamihara K."/>
            <person name="Katsuta N."/>
            <person name="Sato K."/>
            <person name="Tanikawa M."/>
            <person name="Yamazaki M."/>
            <person name="Ninomiya K."/>
            <person name="Ishibashi T."/>
            <person name="Yamashita H."/>
            <person name="Murakawa K."/>
            <person name="Fujimori K."/>
            <person name="Tanai H."/>
            <person name="Kimata M."/>
            <person name="Watanabe M."/>
            <person name="Hiraoka S."/>
            <person name="Chiba Y."/>
            <person name="Ishida S."/>
            <person name="Ono Y."/>
            <person name="Takiguchi S."/>
            <person name="Watanabe S."/>
            <person name="Yosida M."/>
            <person name="Hotuta T."/>
            <person name="Kusano J."/>
            <person name="Kanehori K."/>
            <person name="Takahashi-Fujii A."/>
            <person name="Hara H."/>
            <person name="Tanase T.-O."/>
            <person name="Nomura Y."/>
            <person name="Togiya S."/>
            <person name="Komai F."/>
            <person name="Hara R."/>
            <person name="Takeuchi K."/>
            <person name="Arita M."/>
            <person name="Imose N."/>
            <person name="Musashino K."/>
            <person name="Yuuki H."/>
            <person name="Oshima A."/>
            <person name="Sasaki N."/>
            <person name="Aotsuka S."/>
            <person name="Yoshikawa Y."/>
            <person name="Matsunawa H."/>
            <person name="Ichihara T."/>
            <person name="Shiohata N."/>
            <person name="Sano S."/>
            <person name="Moriya S."/>
            <person name="Momiyama H."/>
            <person name="Satoh N."/>
            <person name="Takami S."/>
            <person name="Terashima Y."/>
            <person name="Suzuki O."/>
            <person name="Nakagawa S."/>
            <person name="Senoh A."/>
            <person name="Mizoguchi H."/>
            <person name="Goto Y."/>
            <person name="Shimizu F."/>
            <person name="Wakebe H."/>
            <person name="Hishigaki H."/>
            <person name="Watanabe T."/>
            <person name="Sugiyama A."/>
            <person name="Takemoto M."/>
            <person name="Kawakami B."/>
            <person name="Yamazaki M."/>
            <person name="Watanabe K."/>
            <person name="Kumagai A."/>
            <person name="Itakura S."/>
            <person name="Fukuzumi Y."/>
            <person name="Fujimori Y."/>
            <person name="Komiyama M."/>
            <person name="Tashiro H."/>
            <person name="Tanigami A."/>
            <person name="Fujiwara T."/>
            <person name="Ono T."/>
            <person name="Yamada K."/>
            <person name="Fujii Y."/>
            <person name="Ozaki K."/>
            <person name="Hirao M."/>
            <person name="Ohmori Y."/>
            <person name="Kawabata A."/>
            <person name="Hikiji T."/>
            <person name="Kobatake N."/>
            <person name="Inagaki H."/>
            <person name="Ikema Y."/>
            <person name="Okamoto S."/>
            <person name="Okitani R."/>
            <person name="Kawakami T."/>
            <person name="Noguchi S."/>
            <person name="Itoh T."/>
            <person name="Shigeta K."/>
            <person name="Senba T."/>
            <person name="Matsumura K."/>
            <person name="Nakajima Y."/>
            <person name="Mizuno T."/>
            <person name="Morinaga M."/>
            <person name="Sasaki M."/>
            <person name="Togashi T."/>
            <person name="Oyama M."/>
            <person name="Hata H."/>
            <person name="Watanabe M."/>
            <person name="Komatsu T."/>
            <person name="Mizushima-Sugano J."/>
            <person name="Satoh T."/>
            <person name="Shirai Y."/>
            <person name="Takahashi Y."/>
            <person name="Nakagawa K."/>
            <person name="Okumura K."/>
            <person name="Nagase T."/>
            <person name="Nomura N."/>
            <person name="Kikuchi H."/>
            <person name="Masuho Y."/>
            <person name="Yamashita R."/>
            <person name="Nakai K."/>
            <person name="Yada T."/>
            <person name="Nakamura Y."/>
            <person name="Ohara O."/>
            <person name="Isogai T."/>
            <person name="Sugano S."/>
        </authorList>
    </citation>
    <scope>NUCLEOTIDE SEQUENCE [LARGE SCALE MRNA] (ISOFORM 1)</scope>
    <source>
        <tissue>Testis</tissue>
    </source>
</reference>
<reference key="4">
    <citation type="journal article" date="2004" name="Nature">
        <title>The DNA sequence and comparative analysis of human chromosome 5.</title>
        <authorList>
            <person name="Schmutz J."/>
            <person name="Martin J."/>
            <person name="Terry A."/>
            <person name="Couronne O."/>
            <person name="Grimwood J."/>
            <person name="Lowry S."/>
            <person name="Gordon L.A."/>
            <person name="Scott D."/>
            <person name="Xie G."/>
            <person name="Huang W."/>
            <person name="Hellsten U."/>
            <person name="Tran-Gyamfi M."/>
            <person name="She X."/>
            <person name="Prabhakar S."/>
            <person name="Aerts A."/>
            <person name="Altherr M."/>
            <person name="Bajorek E."/>
            <person name="Black S."/>
            <person name="Branscomb E."/>
            <person name="Caoile C."/>
            <person name="Challacombe J.F."/>
            <person name="Chan Y.M."/>
            <person name="Denys M."/>
            <person name="Detter J.C."/>
            <person name="Escobar J."/>
            <person name="Flowers D."/>
            <person name="Fotopulos D."/>
            <person name="Glavina T."/>
            <person name="Gomez M."/>
            <person name="Gonzales E."/>
            <person name="Goodstein D."/>
            <person name="Grigoriev I."/>
            <person name="Groza M."/>
            <person name="Hammon N."/>
            <person name="Hawkins T."/>
            <person name="Haydu L."/>
            <person name="Israni S."/>
            <person name="Jett J."/>
            <person name="Kadner K."/>
            <person name="Kimball H."/>
            <person name="Kobayashi A."/>
            <person name="Lopez F."/>
            <person name="Lou Y."/>
            <person name="Martinez D."/>
            <person name="Medina C."/>
            <person name="Morgan J."/>
            <person name="Nandkeshwar R."/>
            <person name="Noonan J.P."/>
            <person name="Pitluck S."/>
            <person name="Pollard M."/>
            <person name="Predki P."/>
            <person name="Priest J."/>
            <person name="Ramirez L."/>
            <person name="Retterer J."/>
            <person name="Rodriguez A."/>
            <person name="Rogers S."/>
            <person name="Salamov A."/>
            <person name="Salazar A."/>
            <person name="Thayer N."/>
            <person name="Tice H."/>
            <person name="Tsai M."/>
            <person name="Ustaszewska A."/>
            <person name="Vo N."/>
            <person name="Wheeler J."/>
            <person name="Wu K."/>
            <person name="Yang J."/>
            <person name="Dickson M."/>
            <person name="Cheng J.-F."/>
            <person name="Eichler E.E."/>
            <person name="Olsen A."/>
            <person name="Pennacchio L.A."/>
            <person name="Rokhsar D.S."/>
            <person name="Richardson P."/>
            <person name="Lucas S.M."/>
            <person name="Myers R.M."/>
            <person name="Rubin E.M."/>
        </authorList>
    </citation>
    <scope>NUCLEOTIDE SEQUENCE [LARGE SCALE GENOMIC DNA]</scope>
</reference>
<reference key="5">
    <citation type="submission" date="2005-09" db="EMBL/GenBank/DDBJ databases">
        <authorList>
            <person name="Mural R.J."/>
            <person name="Istrail S."/>
            <person name="Sutton G.G."/>
            <person name="Florea L."/>
            <person name="Halpern A.L."/>
            <person name="Mobarry C.M."/>
            <person name="Lippert R."/>
            <person name="Walenz B."/>
            <person name="Shatkay H."/>
            <person name="Dew I."/>
            <person name="Miller J.R."/>
            <person name="Flanigan M.J."/>
            <person name="Edwards N.J."/>
            <person name="Bolanos R."/>
            <person name="Fasulo D."/>
            <person name="Halldorsson B.V."/>
            <person name="Hannenhalli S."/>
            <person name="Turner R."/>
            <person name="Yooseph S."/>
            <person name="Lu F."/>
            <person name="Nusskern D.R."/>
            <person name="Shue B.C."/>
            <person name="Zheng X.H."/>
            <person name="Zhong F."/>
            <person name="Delcher A.L."/>
            <person name="Huson D.H."/>
            <person name="Kravitz S.A."/>
            <person name="Mouchard L."/>
            <person name="Reinert K."/>
            <person name="Remington K.A."/>
            <person name="Clark A.G."/>
            <person name="Waterman M.S."/>
            <person name="Eichler E.E."/>
            <person name="Adams M.D."/>
            <person name="Hunkapiller M.W."/>
            <person name="Myers E.W."/>
            <person name="Venter J.C."/>
        </authorList>
    </citation>
    <scope>NUCLEOTIDE SEQUENCE [LARGE SCALE GENOMIC DNA]</scope>
</reference>
<reference key="6">
    <citation type="journal article" date="2004" name="Genome Res.">
        <title>The status, quality, and expansion of the NIH full-length cDNA project: the Mammalian Gene Collection (MGC).</title>
        <authorList>
            <consortium name="The MGC Project Team"/>
        </authorList>
    </citation>
    <scope>NUCLEOTIDE SEQUENCE [LARGE SCALE MRNA] (ISOFORMS 1 AND 2)</scope>
    <scope>VARIANT THR-4</scope>
    <source>
        <tissue>Brain</tissue>
        <tissue>Skin</tissue>
    </source>
</reference>
<reference key="7">
    <citation type="journal article" date="2000" name="Proc. Natl. Acad. Sci. U.S.A.">
        <title>Signal recognition particle components in the nucleolus.</title>
        <authorList>
            <person name="Politz J.C."/>
            <person name="Yarovoi S."/>
            <person name="Kilroy S.M."/>
            <person name="Gowda K."/>
            <person name="Zwieb C."/>
            <person name="Pederson T."/>
        </authorList>
    </citation>
    <scope>SUBCELLULAR LOCATION</scope>
</reference>
<reference key="8">
    <citation type="journal article" date="2001" name="J. Cell Sci.">
        <title>Signal recognition particle protein 19 is imported into the nucleus by importin 8 (RanBP8) and transportin.</title>
        <authorList>
            <person name="Dean K.A."/>
            <person name="von Ahsen O."/>
            <person name="Goerlich D."/>
            <person name="Fried H.M."/>
        </authorList>
    </citation>
    <scope>SUBCELLULAR LOCATION</scope>
    <scope>INTERACTION WITH IPO5; IPO7; IPO8; KPNB1 AND TNPO1</scope>
</reference>
<reference key="9">
    <citation type="journal article" date="2011" name="BMC Syst. Biol.">
        <title>Initial characterization of the human central proteome.</title>
        <authorList>
            <person name="Burkard T.R."/>
            <person name="Planyavsky M."/>
            <person name="Kaupe I."/>
            <person name="Breitwieser F.P."/>
            <person name="Buerckstuemmer T."/>
            <person name="Bennett K.L."/>
            <person name="Superti-Furga G."/>
            <person name="Colinge J."/>
        </authorList>
    </citation>
    <scope>IDENTIFICATION BY MASS SPECTROMETRY [LARGE SCALE ANALYSIS]</scope>
</reference>
<reference key="10">
    <citation type="journal article" date="2015" name="Proteomics">
        <title>N-terminome analysis of the human mitochondrial proteome.</title>
        <authorList>
            <person name="Vaca Jacome A.S."/>
            <person name="Rabilloud T."/>
            <person name="Schaeffer-Reiss C."/>
            <person name="Rompais M."/>
            <person name="Ayoub D."/>
            <person name="Lane L."/>
            <person name="Bairoch A."/>
            <person name="Van Dorsselaer A."/>
            <person name="Carapito C."/>
        </authorList>
    </citation>
    <scope>IDENTIFICATION BY MASS SPECTROMETRY [LARGE SCALE ANALYSIS]</scope>
</reference>
<reference key="11">
    <citation type="journal article" date="2001" name="Science">
        <title>Crystal structure of an early protein-RNA assembly complex of the signal recognition particle.</title>
        <authorList>
            <person name="Wild K."/>
            <person name="Sinning I."/>
            <person name="Cusack S."/>
        </authorList>
    </citation>
    <scope>X-RAY CRYSTALLOGRAPHY (1.8 ANGSTROMS) OF 1-128</scope>
</reference>
<reference key="12">
    <citation type="journal article" date="2002" name="Nat. Struct. Biol.">
        <title>Induced structural changes of 7SL RNA during the assembly of human signal recognition particle.</title>
        <authorList>
            <person name="Kuglstatter A."/>
            <person name="Oubridge C."/>
            <person name="Nagai K."/>
        </authorList>
    </citation>
    <scope>X-RAY CRYSTALLOGRAPHY (3.1 ANGSTROMS) OF 14-120 IN COMPLEX WITH SRP54 AND 7SL RNA</scope>
</reference>
<reference key="13">
    <citation type="journal article" date="2010" name="Acta Crystallogr. D">
        <title>Structural insights into the assembly of the human and archaeal signal recognition particles.</title>
        <authorList>
            <person name="Wild K."/>
            <person name="Bange G."/>
            <person name="Bozkurt G."/>
            <person name="Segnitz B."/>
            <person name="Hendricks A."/>
            <person name="Sinning I."/>
        </authorList>
    </citation>
    <scope>X-RAY CRYSTALLOGRAPHY (3.8 ANGSTROMS) OF 1-120 IN COMPLEX WITH 7SL RNA</scope>
</reference>
<reference evidence="11" key="14">
    <citation type="journal article" date="2014" name="Science">
        <title>SRP RNA remodeling by SRP68 explains its role in protein translocation.</title>
        <authorList>
            <person name="Grotwinkel J.T."/>
            <person name="Wild K."/>
            <person name="Segnitz B."/>
            <person name="Sinning I."/>
        </authorList>
    </citation>
    <scope>X-RAY CRYSTALLOGRAPHY (3.50 ANGSTROMS) OF 1-120 IN COMPLEX WITH SRP68 AND 7SL RNA</scope>
</reference>
<reference evidence="12" key="15">
    <citation type="journal article" date="2017" name="Nucleic Acids Res.">
        <title>Structures of human SRP72 complexes provide insights into SRP RNA remodeling and ribosome interaction.</title>
        <authorList>
            <person name="Becker M.M."/>
            <person name="Lapouge K."/>
            <person name="Segnitz B."/>
            <person name="Wild K."/>
            <person name="Sinning I."/>
        </authorList>
    </citation>
    <scope>X-RAY CRYSTALLOGRAPHY (3.40 ANGSTROMS) OF 11-118 IN COMPLEX WITH SRP68; SRP72 AND 7SL RNA</scope>
    <scope>RNA BINDING</scope>
</reference>
<reference evidence="13" key="16">
    <citation type="journal article" date="2021" name="Sci. Adv.">
        <title>Receptor compaction and GTPase rearrangement drive SRP-mediated cotranslational protein translocation into the ER.</title>
        <authorList>
            <person name="Lee J.H."/>
            <person name="Jomaa A."/>
            <person name="Jomaa A."/>
            <person name="Chung S."/>
            <person name="Hwang Fu Y.H."/>
            <person name="Qian R."/>
            <person name="Sun X."/>
            <person name="Hsieh H.H."/>
            <person name="Chandrasekar S."/>
            <person name="Bi X."/>
            <person name="Mattei S."/>
            <person name="Boehringer D."/>
            <person name="Weiss S."/>
            <person name="Ban N."/>
            <person name="Shan S.O."/>
        </authorList>
    </citation>
    <scope>STRUCTURE BY ELECTRON MICROSCOPY (3.20 ANGSTROMS) OF SIGNAL RECOGNITION PARTICLE IN COMPLEX WITH RIBOSOME NASCENT CHAIN COMPLEX AND THE SRP RECEPTOR</scope>
</reference>
<evidence type="ECO:0000250" key="1">
    <source>
        <dbReference type="UniProtKB" id="J9PAS6"/>
    </source>
</evidence>
<evidence type="ECO:0000256" key="2">
    <source>
        <dbReference type="SAM" id="MobiDB-lite"/>
    </source>
</evidence>
<evidence type="ECO:0000269" key="3">
    <source>
    </source>
</evidence>
<evidence type="ECO:0000269" key="4">
    <source>
    </source>
</evidence>
<evidence type="ECO:0000269" key="5">
    <source>
    </source>
</evidence>
<evidence type="ECO:0000269" key="6">
    <source>
    </source>
</evidence>
<evidence type="ECO:0000269" key="7">
    <source>
    </source>
</evidence>
<evidence type="ECO:0000303" key="8">
    <source>
    </source>
</evidence>
<evidence type="ECO:0000303" key="9">
    <source ref="2"/>
</evidence>
<evidence type="ECO:0000305" key="10"/>
<evidence type="ECO:0007744" key="11">
    <source>
        <dbReference type="PDB" id="4P3E"/>
    </source>
</evidence>
<evidence type="ECO:0007744" key="12">
    <source>
        <dbReference type="PDB" id="5M73"/>
    </source>
</evidence>
<evidence type="ECO:0007744" key="13">
    <source>
        <dbReference type="PDB" id="7NFX"/>
    </source>
</evidence>
<evidence type="ECO:0007829" key="14">
    <source>
        <dbReference type="PDB" id="1JID"/>
    </source>
</evidence>
<evidence type="ECO:0007829" key="15">
    <source>
        <dbReference type="PDB" id="1MFQ"/>
    </source>
</evidence>
<evidence type="ECO:0007829" key="16">
    <source>
        <dbReference type="PDB" id="4P3E"/>
    </source>
</evidence>
<dbReference type="EMBL" id="X12791">
    <property type="protein sequence ID" value="CAA31280.1"/>
    <property type="molecule type" value="mRNA"/>
</dbReference>
<dbReference type="EMBL" id="BU661702">
    <property type="status" value="NOT_ANNOTATED_CDS"/>
    <property type="molecule type" value="mRNA"/>
</dbReference>
<dbReference type="EMBL" id="AK311803">
    <property type="protein sequence ID" value="BAG34746.1"/>
    <property type="molecule type" value="mRNA"/>
</dbReference>
<dbReference type="EMBL" id="AC008536">
    <property type="status" value="NOT_ANNOTATED_CDS"/>
    <property type="molecule type" value="Genomic_DNA"/>
</dbReference>
<dbReference type="EMBL" id="AC008575">
    <property type="status" value="NOT_ANNOTATED_CDS"/>
    <property type="molecule type" value="Genomic_DNA"/>
</dbReference>
<dbReference type="EMBL" id="CH471086">
    <property type="protein sequence ID" value="EAW48999.1"/>
    <property type="molecule type" value="Genomic_DNA"/>
</dbReference>
<dbReference type="EMBL" id="CH471086">
    <property type="protein sequence ID" value="EAW49000.1"/>
    <property type="molecule type" value="Genomic_DNA"/>
</dbReference>
<dbReference type="EMBL" id="BC010947">
    <property type="protein sequence ID" value="AAH10947.1"/>
    <property type="molecule type" value="mRNA"/>
</dbReference>
<dbReference type="EMBL" id="BC017830">
    <property type="protein sequence ID" value="AAH17830.1"/>
    <property type="molecule type" value="mRNA"/>
</dbReference>
<dbReference type="CCDS" id="CCDS4108.1">
    <molecule id="P09132-1"/>
</dbReference>
<dbReference type="CCDS" id="CCDS56375.1">
    <molecule id="P09132-2"/>
</dbReference>
<dbReference type="CCDS" id="CCDS56376.1">
    <molecule id="P09132-3"/>
</dbReference>
<dbReference type="PIR" id="S01700">
    <property type="entry name" value="S01700"/>
</dbReference>
<dbReference type="RefSeq" id="NP_001191122.1">
    <molecule id="P09132-2"/>
    <property type="nucleotide sequence ID" value="NM_001204193.2"/>
</dbReference>
<dbReference type="RefSeq" id="NP_001191123.1">
    <property type="nucleotide sequence ID" value="NM_001204194.1"/>
</dbReference>
<dbReference type="RefSeq" id="NP_001191125.1">
    <molecule id="P09132-3"/>
    <property type="nucleotide sequence ID" value="NM_001204196.2"/>
</dbReference>
<dbReference type="RefSeq" id="NP_003126.1">
    <molecule id="P09132-1"/>
    <property type="nucleotide sequence ID" value="NM_003135.3"/>
</dbReference>
<dbReference type="PDB" id="1JID">
    <property type="method" value="X-ray"/>
    <property type="resolution" value="1.80 A"/>
    <property type="chains" value="A=1-120"/>
</dbReference>
<dbReference type="PDB" id="1MFQ">
    <property type="method" value="X-ray"/>
    <property type="resolution" value="3.10 A"/>
    <property type="chains" value="B=14-120"/>
</dbReference>
<dbReference type="PDB" id="1RY1">
    <property type="method" value="EM"/>
    <property type="resolution" value="12.00 A"/>
    <property type="chains" value="B=14-120"/>
</dbReference>
<dbReference type="PDB" id="2J37">
    <property type="method" value="EM"/>
    <property type="resolution" value="8.00 A"/>
    <property type="chains" value="B=14-120"/>
</dbReference>
<dbReference type="PDB" id="3KTV">
    <property type="method" value="X-ray"/>
    <property type="resolution" value="3.80 A"/>
    <property type="chains" value="B/D=1-120"/>
</dbReference>
<dbReference type="PDB" id="4P3E">
    <property type="method" value="X-ray"/>
    <property type="resolution" value="3.50 A"/>
    <property type="chains" value="B=1-120"/>
</dbReference>
<dbReference type="PDB" id="5M73">
    <property type="method" value="X-ray"/>
    <property type="resolution" value="3.40 A"/>
    <property type="chains" value="B/F=11-118"/>
</dbReference>
<dbReference type="PDB" id="7NFX">
    <property type="method" value="EM"/>
    <property type="resolution" value="3.20 A"/>
    <property type="chains" value="q=1-144"/>
</dbReference>
<dbReference type="PDB" id="7QWQ">
    <property type="method" value="EM"/>
    <property type="resolution" value="2.83 A"/>
    <property type="chains" value="q=1-144"/>
</dbReference>
<dbReference type="PDBsum" id="1JID"/>
<dbReference type="PDBsum" id="1MFQ"/>
<dbReference type="PDBsum" id="1RY1"/>
<dbReference type="PDBsum" id="2J37"/>
<dbReference type="PDBsum" id="3KTV"/>
<dbReference type="PDBsum" id="4P3E"/>
<dbReference type="PDBsum" id="5M73"/>
<dbReference type="PDBsum" id="7NFX"/>
<dbReference type="PDBsum" id="7QWQ"/>
<dbReference type="EMDB" id="EMD-12303"/>
<dbReference type="EMDB" id="EMD-1264"/>
<dbReference type="EMDB" id="EMD-14191"/>
<dbReference type="SMR" id="P09132"/>
<dbReference type="BioGRID" id="112606">
    <property type="interactions" value="267"/>
</dbReference>
<dbReference type="ComplexPortal" id="CPX-2652">
    <property type="entry name" value="Signal recognition particle"/>
</dbReference>
<dbReference type="DIP" id="DIP-41412N"/>
<dbReference type="FunCoup" id="P09132">
    <property type="interactions" value="2726"/>
</dbReference>
<dbReference type="IntAct" id="P09132">
    <property type="interactions" value="207"/>
</dbReference>
<dbReference type="MINT" id="P09132"/>
<dbReference type="STRING" id="9606.ENSP00000424870"/>
<dbReference type="ChEMBL" id="CHEMBL4295704"/>
<dbReference type="TCDB" id="3.A.5.9.1">
    <property type="family name" value="the general secretory pathway (sec) family"/>
</dbReference>
<dbReference type="GlyGen" id="P09132">
    <property type="glycosylation" value="1 site, 1 O-linked glycan (1 site)"/>
</dbReference>
<dbReference type="iPTMnet" id="P09132"/>
<dbReference type="PhosphoSitePlus" id="P09132"/>
<dbReference type="SwissPalm" id="P09132"/>
<dbReference type="BioMuta" id="SRP19"/>
<dbReference type="DMDM" id="115502457"/>
<dbReference type="jPOST" id="P09132"/>
<dbReference type="MassIVE" id="P09132"/>
<dbReference type="PaxDb" id="9606-ENSP00000424870"/>
<dbReference type="PeptideAtlas" id="P09132"/>
<dbReference type="ProteomicsDB" id="13963"/>
<dbReference type="ProteomicsDB" id="52203">
    <molecule id="P09132-1"/>
</dbReference>
<dbReference type="ProteomicsDB" id="52204">
    <molecule id="P09132-2"/>
</dbReference>
<dbReference type="Pumba" id="P09132"/>
<dbReference type="Antibodypedia" id="13558">
    <property type="antibodies" value="178 antibodies from 30 providers"/>
</dbReference>
<dbReference type="DNASU" id="6728"/>
<dbReference type="Ensembl" id="ENST00000282999.7">
    <molecule id="P09132-2"/>
    <property type="protein sequence ID" value="ENSP00000282999.3"/>
    <property type="gene ID" value="ENSG00000153037.15"/>
</dbReference>
<dbReference type="Ensembl" id="ENST00000505459.6">
    <molecule id="P09132-1"/>
    <property type="protein sequence ID" value="ENSP00000424870.1"/>
    <property type="gene ID" value="ENSG00000153037.15"/>
</dbReference>
<dbReference type="Ensembl" id="ENST00000515463.1">
    <molecule id="P09132-3"/>
    <property type="protein sequence ID" value="ENSP00000425562.1"/>
    <property type="gene ID" value="ENSG00000153037.15"/>
</dbReference>
<dbReference type="GeneID" id="6728"/>
<dbReference type="KEGG" id="hsa:6728"/>
<dbReference type="MANE-Select" id="ENST00000505459.6">
    <property type="protein sequence ID" value="ENSP00000424870.1"/>
    <property type="RefSeq nucleotide sequence ID" value="NM_003135.3"/>
    <property type="RefSeq protein sequence ID" value="NP_003126.1"/>
</dbReference>
<dbReference type="UCSC" id="uc003kqb.3">
    <molecule id="P09132-1"/>
    <property type="organism name" value="human"/>
</dbReference>
<dbReference type="AGR" id="HGNC:11300"/>
<dbReference type="CTD" id="6728"/>
<dbReference type="DisGeNET" id="6728"/>
<dbReference type="GeneCards" id="SRP19"/>
<dbReference type="HGNC" id="HGNC:11300">
    <property type="gene designation" value="SRP19"/>
</dbReference>
<dbReference type="HPA" id="ENSG00000153037">
    <property type="expression patterns" value="Low tissue specificity"/>
</dbReference>
<dbReference type="MalaCards" id="SRP19"/>
<dbReference type="MIM" id="182175">
    <property type="type" value="gene"/>
</dbReference>
<dbReference type="neXtProt" id="NX_P09132"/>
<dbReference type="OpenTargets" id="ENSG00000153037"/>
<dbReference type="Orphanet" id="486">
    <property type="disease" value="Autosomal dominant severe congenital neutropenia"/>
</dbReference>
<dbReference type="PharmGKB" id="PA36124"/>
<dbReference type="VEuPathDB" id="HostDB:ENSG00000153037"/>
<dbReference type="eggNOG" id="KOG3198">
    <property type="taxonomic scope" value="Eukaryota"/>
</dbReference>
<dbReference type="GeneTree" id="ENSGT00390000004950"/>
<dbReference type="HOGENOM" id="CLU_2621387_0_0_1"/>
<dbReference type="InParanoid" id="P09132"/>
<dbReference type="OMA" id="QMERWIC"/>
<dbReference type="OrthoDB" id="2190947at2759"/>
<dbReference type="PAN-GO" id="P09132">
    <property type="GO annotations" value="3 GO annotations based on evolutionary models"/>
</dbReference>
<dbReference type="PhylomeDB" id="P09132"/>
<dbReference type="TreeFam" id="TF106248"/>
<dbReference type="PathwayCommons" id="P09132"/>
<dbReference type="Reactome" id="R-HSA-1799339">
    <property type="pathway name" value="SRP-dependent cotranslational protein targeting to membrane"/>
</dbReference>
<dbReference type="SignaLink" id="P09132"/>
<dbReference type="SIGNOR" id="P09132"/>
<dbReference type="BioGRID-ORCS" id="6728">
    <property type="hits" value="787 hits in 1175 CRISPR screens"/>
</dbReference>
<dbReference type="CD-CODE" id="91857CE7">
    <property type="entry name" value="Nucleolus"/>
</dbReference>
<dbReference type="ChiTaRS" id="SRP19">
    <property type="organism name" value="human"/>
</dbReference>
<dbReference type="EvolutionaryTrace" id="P09132"/>
<dbReference type="GenomeRNAi" id="6728"/>
<dbReference type="Pharos" id="P09132">
    <property type="development level" value="Tbio"/>
</dbReference>
<dbReference type="PRO" id="PR:P09132"/>
<dbReference type="Proteomes" id="UP000005640">
    <property type="component" value="Chromosome 5"/>
</dbReference>
<dbReference type="RNAct" id="P09132">
    <property type="molecule type" value="protein"/>
</dbReference>
<dbReference type="Bgee" id="ENSG00000153037">
    <property type="expression patterns" value="Expressed in adenohypophysis and 106 other cell types or tissues"/>
</dbReference>
<dbReference type="ExpressionAtlas" id="P09132">
    <property type="expression patterns" value="baseline and differential"/>
</dbReference>
<dbReference type="GO" id="GO:0005829">
    <property type="term" value="C:cytosol"/>
    <property type="evidence" value="ECO:0000314"/>
    <property type="project" value="HPA"/>
</dbReference>
<dbReference type="GO" id="GO:0016604">
    <property type="term" value="C:nuclear body"/>
    <property type="evidence" value="ECO:0000314"/>
    <property type="project" value="HPA"/>
</dbReference>
<dbReference type="GO" id="GO:0005730">
    <property type="term" value="C:nucleolus"/>
    <property type="evidence" value="ECO:0000314"/>
    <property type="project" value="MGI"/>
</dbReference>
<dbReference type="GO" id="GO:0048500">
    <property type="term" value="C:signal recognition particle"/>
    <property type="evidence" value="ECO:0000314"/>
    <property type="project" value="CAFA"/>
</dbReference>
<dbReference type="GO" id="GO:0005786">
    <property type="term" value="C:signal recognition particle, endoplasmic reticulum targeting"/>
    <property type="evidence" value="ECO:0000314"/>
    <property type="project" value="UniProtKB"/>
</dbReference>
<dbReference type="GO" id="GO:0008312">
    <property type="term" value="F:7S RNA binding"/>
    <property type="evidence" value="ECO:0000314"/>
    <property type="project" value="UniProtKB"/>
</dbReference>
<dbReference type="GO" id="GO:0003723">
    <property type="term" value="F:RNA binding"/>
    <property type="evidence" value="ECO:0000353"/>
    <property type="project" value="DisProt"/>
</dbReference>
<dbReference type="GO" id="GO:0006613">
    <property type="term" value="P:cotranslational protein targeting to membrane"/>
    <property type="evidence" value="ECO:0000304"/>
    <property type="project" value="ProtInc"/>
</dbReference>
<dbReference type="GO" id="GO:0006617">
    <property type="term" value="P:SRP-dependent cotranslational protein targeting to membrane, signal sequence recognition"/>
    <property type="evidence" value="ECO:0000318"/>
    <property type="project" value="GO_Central"/>
</dbReference>
<dbReference type="DisProt" id="DP00570"/>
<dbReference type="FunFam" id="3.30.56.30:FF:000001">
    <property type="entry name" value="signal recognition particle 19 kDa protein"/>
    <property type="match status" value="1"/>
</dbReference>
<dbReference type="Gene3D" id="3.30.56.30">
    <property type="entry name" value="Signal recognition particle, SRP19-like subunit"/>
    <property type="match status" value="1"/>
</dbReference>
<dbReference type="InterPro" id="IPR002778">
    <property type="entry name" value="Signal_recog_particle_SRP19"/>
</dbReference>
<dbReference type="InterPro" id="IPR036521">
    <property type="entry name" value="SRP19-like_sf"/>
</dbReference>
<dbReference type="PANTHER" id="PTHR17453">
    <property type="entry name" value="SIGNAL RECOGNITION PARTICLE 19 KD PROTEIN"/>
    <property type="match status" value="1"/>
</dbReference>
<dbReference type="PANTHER" id="PTHR17453:SF0">
    <property type="entry name" value="SIGNAL RECOGNITION PARTICLE 19 KDA PROTEIN"/>
    <property type="match status" value="1"/>
</dbReference>
<dbReference type="Pfam" id="PF01922">
    <property type="entry name" value="SRP19"/>
    <property type="match status" value="1"/>
</dbReference>
<dbReference type="SUPFAM" id="SSF69695">
    <property type="entry name" value="SRP19"/>
    <property type="match status" value="1"/>
</dbReference>
<accession>P09132</accession>
<accession>B2R4E9</accession>
<accession>D6RCQ5</accession>
<accession>Q05D77</accession>
<accession>Q96FG6</accession>